<keyword id="KW-0413">Isomerase</keyword>
<keyword id="KW-0436">Ligase</keyword>
<keyword id="KW-0489">Methyltransferase</keyword>
<keyword id="KW-0511">Multifunctional enzyme</keyword>
<keyword id="KW-0560">Oxidoreductase</keyword>
<keyword id="KW-0596">Phosphopantetheine</keyword>
<keyword id="KW-0597">Phosphoprotein</keyword>
<keyword id="KW-0677">Repeat</keyword>
<keyword id="KW-0808">Transferase</keyword>
<sequence>MGAPNSTREPIAIVGTACRFPGGANTPSKLWDLLCEKRDVQTRIPPERFNPDAFYHRNGEKSGCTDVKKAYLLTEDIRAFDASFFKINPREAEAMDPQQRLLLETVYEATEAAGLPYEDLKGSNTAVYVGSMTGDYHEMLLRDPQDMPKYMATGTARSILSNRVSYFFDWKGPSMTIDTACSSSLVAVHEAVTALRLGVSNIACAAGTNLILGPEMMISESKLHMLSPTGRSKMWDASANGYARGEGTAAIMMKTLSQALSDGDHVYGIIRETGVNSDGHTNGITLPSSESQKTLIRQTYANAGLDLIKERCQFFEAHGTGTPAGDPIEARAIHEAFFEDAAGSSDQMFVGSVKTAIGHLEGCAGLAGLIKALEAVRRGVIPPNQLFENLNPALKPFAGNLSIPTETLPWPEVAPGTPRRASVNSFGFGGTNAHAIIESFDNTPQPAPTGGIISYPLVLSANSEKSLRRQISQLHDTLQNAGEGEVQDTLYTLAQRRSQLPARTYFSGHTQEELLKKLSAASAEDATITVASQEVTNQNSRILGVFTGQGAQWPTMGREILKSSAFAGDLITRLETSLASLQEPPTWTLSEQILADPESSRLGEAAVSQPVCTAVQLMLVELLRQAGITFSTVIGHSSGEIAAAYAAGFLTPEDAIRIAYCRGVCAKLAGGEEGQKGSMMAVGLSYEEAACFCEDHFPGCIDVAASNAPSSATLSGDKDAILEAKALLDEQGTFARVLKVDTAYHSRHMQPCAEPYMALLRESNIQLLPGDDSCEWFSSVIGERMSSFTHGQLLTGEYWVENMVKPVLFTLASELAADSKLPCHVALEVGPHPALKGPFSQTYKRATGSQLPYQGALTRNVHDVEALSDALGFIWARLGKSAVNFASHAELFSVSKTSFSTNLPSYPWDHSQSFWKESRKSANFRQRTSPPHPLLGTRSTEDATQDLRWLNILHLDDAPWLEGHKVEGLVVYPAAAYLVMAMESAKSIDETKTIQLVELFDVQILSAIQLSQDSQGVETLFTLEIDDVNSTAATARWSLFTSMVGRGSNWKCNAKGHLRVDFGSEAQDSLLPSRDPPVASLTSVNIERFYTSLAEIGLGYTGAFKHLATVQRQSGFATAKASQMNTDFSAMIHPALLDSAFQSLFAAYCWPDDGSLAAPFVPTFFKSLRIVSLDHIENGQELTIDSYLTDTNDREITADLDIFTSDSEKPLLQLQGLTCTSLLRPGPSNAKELYTQTKWEVDISCAVASLDVQQHDAAEDLDLVDLCERLSYYYLRELNRKVDRSEVPAMDWHFQRIFEWIDYLFPIIEAGKHTTIRKEWSADEGSWLLEQASKFPGQVDLLLIRAVGENLTEVVRKETTMLEHMVRNDVLNRFYKFGLGFQRANGYLSRISKQIAHRYPQMKILEIGAGTGGATKGILESLGTTFESYTFTDISTGFFEAAAEAFEPWVSKIIFKPLNVENDPVEQGFLEAQYDFIVASNVLHATKSLSTTMRNVRRLLKPGGQLLLLEVTSDIVRVRLMMSGLSGWWLGGDDGRRYAPTITVPEWDSLLRSTGFSGVDHTVNDFYDPSKYMTSVMLSQAVDDHHVDILRKPLNSALGWLPQRCITIIGGKNNEIAQQVSKTLLSMKSASLDLINHVDSFEQLASTPELPLRAVLILEDLDEPVLKSLTSEKLAGLQRTINDSRQILWVSKGCQKDEPYANMSTGLCRSLASEYPHIQLQHIDMETGLDSLAVSRIVEALIRIVYKASLKQDDDLLWSHEAELILEDEGRWLIPRILPDDKLNDHLNAGKMKVKTNASLADTPVEIQQAGSQWVISQTVPSLPISDNTDHIRIKASYSTLHAVRVRGSRVYLSYGHRVTGSTTPVIAFSETAGSIISVPESQVFDVPQGFDIDQSASLRSLVLTAIVESVLAECDHGAAIIVHEADNYLGAAFETKCREIGLKLVRTTSKSDHKDDAIFIHPLAPERVVKKALPHVEVAVVVDLSGRDYSVVDSPLRRHVPSTTKFLELSDLIGSVTCGLRDVNIQCVQDAIESSFKSPSDGPVVNISEVSGLQASETSYATVVDWSIEKPVSVQVQPLQANRLLRSDRTYLLAGCTGGLGKALCRWMVAAGVRHLALTTRNVEAIDKVWLEGLQLQGADVRLFQVDVGDKAALERAHAQVTAEMPPICGVANAAMVLSDRSFGELKVGDFDKVFGPKVRGTQNLHELFQDEPLDFFIMFSSLASVVGNRGQANYAAANLFMTAVAEQRRAKNLAASVIHIGMILGVGYVSSTGAYEATLRQYNYMPISEPDFLNMFSEAILVGQPGSSHAPELITGLNRYSLQEDAPKFFWHENMRFSHHTLEEQHQESTSTTKASISQRLAQVQTPAEMLEVVEEEFCTKLERMLQAESGTIKVSQPLMSLGVDSLIAAEIRSWFFKELDVDMPVLEILNTASVAEICSTAVASLATLAPQEQTETTTLVTSEAVQSLNAVSGNGSSSSRAPTEFNSSTLKSGAQSTQGTSVSGDKDTNSVDGSAKVERNGPLSFAQERIWFLQQYLQDATTFNVTMAYRITGPLRVNDLESAFQKVIQRHESLRTGFHMDPETTVPTQIVYEQSPFGLEQRNDSDITKEFEELQNTHYDLENGRVLKAIVLTKPDTDEHILLVGFHHIALDGFSAQILVRDLAIAYAGGNLAPLDKGYLDFAVDQRAAVYPAETLQYWKTEFETLPPALPVFDFAETKTRLPLTDYKTRVSERTLQPDVAGKAKSAARALAATPFHVYLAALQVLLSDFASTQDVCIGITDANKNDAAHMDTIGFFVNLLPLRFQLSASQTLAELVSNTKAKANGALTHSRLPFDVLLDELKIPRSTSHSPLFQVVLNFKMGSTQKVPLADCQAEVIDFKDVNNPYDLAFDIETYPDGSTSISVKSQEYLYTKNELDLILESYINLLSLFEKDSSKTLGEVSQCTPDEAQKTLTLGRGERIPSPSFDTLSHYFEDWVKRQPDAIAIRDDQGTTLSYSQLKSFVNNIAATLEKSGLTPGARVGVYCEPSIFIIASLLAIAEVGGVYVPLDPQNPIKRLQLIVDDCEPEILLFDESTKELAPKLQTNASLINIYNVRRLPSSAAITNRAQGAGMAYMFYTSGTTGVPKGVALTHANLVHHIDSITHFYDIKRGTMLQQAPLGFDMSLTQMSLSTMLGGTLVVASSEARKDPLQLAKLMLSERVTHTFMTPTLAVALIHHGYEYLVKCVGWEFSLLSGEAFRTHVISEFQRLGLPQLKLFNGYGPTEITINSSSGLNELDLAAPRDTRNPTIGFTLPNYSCYILDEDLKPVRPGHAGELFVGGAGIAVGYLRRDELNKERFLSDPFASSEDVARGWARMYRTGDKAKFLPDGRIVFLGRIAGDSQIKLRGFRIELEDIANTIVKSSGGVVSEAAVSFRQGVNGPDDGAFLVAFAIISQAHRPENPSSFLKQLLKDLSLPRYMIPAKIVQVEHLPMGPTGKLDQNALDVMPIPQDENVHEETLTTTQERLRALWFESLPAVAPDAFIGSETDFFEAGGNSLRIVMLREHIAREFGVMVSVFDLFQASTLGGMAAKIDGSTGADNQPIIWEEETRVDIPSGLETPDEPAILDGDELEVALTGATGFLGLAILRSLLKDERISRVHCLAVRSPSKARDEVFKSPRVVVYHGDLSSPRLGLSEDEFGTLSKKFDIIIHNGAEVSFLKSYQALKKANVSSTKELAQLASGRQIPFHFVSTGGVVNLTDHDGLPEISVSGFKPPIDGTEGYAASKWASEVILESHAERAHLPVWIHRPANVTGAAAPATDLMGSILQYSTTMQSLPEISNWKGSFDFVPVEQVADEIAASIHESRSSEPVYRHHCGDQKISVSELSAHLEAGIGAKMEIIGVDDWLARARSTGIDETTALLVEKMLSGENGGTVPWLRKGE</sequence>
<gene>
    <name evidence="8" type="primary">LUC5</name>
</gene>
<evidence type="ECO:0000255" key="1"/>
<evidence type="ECO:0000255" key="2">
    <source>
        <dbReference type="PROSITE-ProRule" id="PRU00258"/>
    </source>
</evidence>
<evidence type="ECO:0000255" key="3">
    <source>
        <dbReference type="PROSITE-ProRule" id="PRU01348"/>
    </source>
</evidence>
<evidence type="ECO:0000255" key="4">
    <source>
        <dbReference type="PROSITE-ProRule" id="PRU01363"/>
    </source>
</evidence>
<evidence type="ECO:0000256" key="5">
    <source>
        <dbReference type="SAM" id="MobiDB-lite"/>
    </source>
</evidence>
<evidence type="ECO:0000269" key="6">
    <source>
    </source>
</evidence>
<evidence type="ECO:0000269" key="7">
    <source>
    </source>
</evidence>
<evidence type="ECO:0000303" key="8">
    <source>
    </source>
</evidence>
<evidence type="ECO:0000305" key="9"/>
<evidence type="ECO:0000305" key="10">
    <source>
    </source>
</evidence>
<evidence type="ECO:0000305" key="11">
    <source>
    </source>
</evidence>
<reference key="1">
    <citation type="journal article" date="2020" name="Biosci. Biotechnol. Biochem.">
        <title>Biosynthetic gene cluster identification and biological activity of lucilactaene from Fusarium sp. RK97-94.</title>
        <authorList>
            <person name="Kato S."/>
            <person name="Motoyama T."/>
            <person name="Futamura Y."/>
            <person name="Uramoto M."/>
            <person name="Nogawa T."/>
            <person name="Hayashi T."/>
            <person name="Hirota H."/>
            <person name="Tanaka A."/>
            <person name="Takahashi-Ando N."/>
            <person name="Kamakura T."/>
            <person name="Osada H."/>
        </authorList>
    </citation>
    <scope>NUCLEOTIDE SEQUENCE [GENOMIC DNA]</scope>
    <scope>FUNCTION</scope>
    <scope>DISRUPTION PHENOTYPE</scope>
    <scope>DOMAIN</scope>
    <scope>PATHWAY</scope>
    <source>
        <strain>RK97-94</strain>
    </source>
</reference>
<reference key="2">
    <citation type="journal article" date="2022" name="J. Antibiot.">
        <title>Isolation of new lucilactaene derivatives from P450 monooxygenase and aldehyde dehydrogenase knockout Fusarium sp. RK97-94 strains and their biological activities.</title>
        <authorList>
            <person name="Abdelhakim I.A."/>
            <person name="Motoyama T."/>
            <person name="Nogawa T."/>
            <person name="Mahmud F.B."/>
            <person name="Futamura Y."/>
            <person name="Takahashi S."/>
            <person name="Osada H."/>
        </authorList>
    </citation>
    <scope>FUNCTION</scope>
    <scope>DISRUPTION PHENOTYPE</scope>
    <scope>PATHWAY</scope>
</reference>
<proteinExistence type="inferred from homology"/>
<protein>
    <recommendedName>
        <fullName evidence="8">Hybrid PKS-NRPS synthetase LUC5</fullName>
        <ecNumber evidence="10">2.3.1.-</ecNumber>
        <ecNumber evidence="10">6.3.2.-</ecNumber>
    </recommendedName>
    <alternativeName>
        <fullName evidence="8">Lucilactaene biosynthesis cluster protein 5</fullName>
    </alternativeName>
</protein>
<dbReference type="EC" id="2.3.1.-" evidence="10"/>
<dbReference type="EC" id="6.3.2.-" evidence="10"/>
<dbReference type="EMBL" id="LC515193">
    <property type="protein sequence ID" value="BBQ09587.1"/>
    <property type="molecule type" value="Genomic_DNA"/>
</dbReference>
<dbReference type="SMR" id="A0A6J4B487"/>
<dbReference type="GO" id="GO:0004315">
    <property type="term" value="F:3-oxoacyl-[acyl-carrier-protein] synthase activity"/>
    <property type="evidence" value="ECO:0007669"/>
    <property type="project" value="InterPro"/>
</dbReference>
<dbReference type="GO" id="GO:0004312">
    <property type="term" value="F:fatty acid synthase activity"/>
    <property type="evidence" value="ECO:0007669"/>
    <property type="project" value="TreeGrafter"/>
</dbReference>
<dbReference type="GO" id="GO:0016853">
    <property type="term" value="F:isomerase activity"/>
    <property type="evidence" value="ECO:0007669"/>
    <property type="project" value="UniProtKB-KW"/>
</dbReference>
<dbReference type="GO" id="GO:0016874">
    <property type="term" value="F:ligase activity"/>
    <property type="evidence" value="ECO:0007669"/>
    <property type="project" value="UniProtKB-KW"/>
</dbReference>
<dbReference type="GO" id="GO:0008168">
    <property type="term" value="F:methyltransferase activity"/>
    <property type="evidence" value="ECO:0007669"/>
    <property type="project" value="UniProtKB-KW"/>
</dbReference>
<dbReference type="GO" id="GO:0016491">
    <property type="term" value="F:oxidoreductase activity"/>
    <property type="evidence" value="ECO:0007669"/>
    <property type="project" value="UniProtKB-KW"/>
</dbReference>
<dbReference type="GO" id="GO:0031177">
    <property type="term" value="F:phosphopantetheine binding"/>
    <property type="evidence" value="ECO:0007669"/>
    <property type="project" value="InterPro"/>
</dbReference>
<dbReference type="GO" id="GO:0006633">
    <property type="term" value="P:fatty acid biosynthetic process"/>
    <property type="evidence" value="ECO:0007669"/>
    <property type="project" value="InterPro"/>
</dbReference>
<dbReference type="GO" id="GO:0032259">
    <property type="term" value="P:methylation"/>
    <property type="evidence" value="ECO:0007669"/>
    <property type="project" value="UniProtKB-KW"/>
</dbReference>
<dbReference type="GO" id="GO:0030639">
    <property type="term" value="P:polyketide biosynthetic process"/>
    <property type="evidence" value="ECO:0007669"/>
    <property type="project" value="UniProtKB-ARBA"/>
</dbReference>
<dbReference type="GO" id="GO:0009403">
    <property type="term" value="P:toxin biosynthetic process"/>
    <property type="evidence" value="ECO:0007669"/>
    <property type="project" value="UniProtKB-ARBA"/>
</dbReference>
<dbReference type="CDD" id="cd05930">
    <property type="entry name" value="A_NRPS"/>
    <property type="match status" value="1"/>
</dbReference>
<dbReference type="CDD" id="cd19532">
    <property type="entry name" value="C_PKS-NRPS"/>
    <property type="match status" value="1"/>
</dbReference>
<dbReference type="CDD" id="cd00833">
    <property type="entry name" value="PKS"/>
    <property type="match status" value="1"/>
</dbReference>
<dbReference type="FunFam" id="3.40.47.10:FF:000019">
    <property type="entry name" value="Polyketide synthase type I"/>
    <property type="match status" value="1"/>
</dbReference>
<dbReference type="Gene3D" id="3.30.300.30">
    <property type="match status" value="1"/>
</dbReference>
<dbReference type="Gene3D" id="3.40.47.10">
    <property type="match status" value="1"/>
</dbReference>
<dbReference type="Gene3D" id="1.10.1200.10">
    <property type="entry name" value="ACP-like"/>
    <property type="match status" value="2"/>
</dbReference>
<dbReference type="Gene3D" id="3.30.559.10">
    <property type="entry name" value="Chloramphenicol acetyltransferase-like domain"/>
    <property type="match status" value="1"/>
</dbReference>
<dbReference type="Gene3D" id="3.40.366.10">
    <property type="entry name" value="Malonyl-Coenzyme A Acyl Carrier Protein, domain 2"/>
    <property type="match status" value="1"/>
</dbReference>
<dbReference type="Gene3D" id="3.40.50.12780">
    <property type="entry name" value="N-terminal domain of ligase-like"/>
    <property type="match status" value="1"/>
</dbReference>
<dbReference type="Gene3D" id="3.40.50.720">
    <property type="entry name" value="NAD(P)-binding Rossmann-like Domain"/>
    <property type="match status" value="3"/>
</dbReference>
<dbReference type="Gene3D" id="3.30.559.30">
    <property type="entry name" value="Nonribosomal peptide synthetase, condensation domain"/>
    <property type="match status" value="1"/>
</dbReference>
<dbReference type="Gene3D" id="3.10.129.110">
    <property type="entry name" value="Polyketide synthase dehydratase"/>
    <property type="match status" value="1"/>
</dbReference>
<dbReference type="Gene3D" id="3.40.50.150">
    <property type="entry name" value="Vaccinia Virus protein VP39"/>
    <property type="match status" value="1"/>
</dbReference>
<dbReference type="InterPro" id="IPR010071">
    <property type="entry name" value="AA_adenyl_dom"/>
</dbReference>
<dbReference type="InterPro" id="IPR001227">
    <property type="entry name" value="Ac_transferase_dom_sf"/>
</dbReference>
<dbReference type="InterPro" id="IPR036736">
    <property type="entry name" value="ACP-like_sf"/>
</dbReference>
<dbReference type="InterPro" id="IPR014043">
    <property type="entry name" value="Acyl_transferase_dom"/>
</dbReference>
<dbReference type="InterPro" id="IPR016035">
    <property type="entry name" value="Acyl_Trfase/lysoPLipase"/>
</dbReference>
<dbReference type="InterPro" id="IPR045851">
    <property type="entry name" value="AMP-bd_C_sf"/>
</dbReference>
<dbReference type="InterPro" id="IPR020845">
    <property type="entry name" value="AMP-binding_CS"/>
</dbReference>
<dbReference type="InterPro" id="IPR000873">
    <property type="entry name" value="AMP-dep_synth/lig_dom"/>
</dbReference>
<dbReference type="InterPro" id="IPR042099">
    <property type="entry name" value="ANL_N_sf"/>
</dbReference>
<dbReference type="InterPro" id="IPR023213">
    <property type="entry name" value="CAT-like_dom_sf"/>
</dbReference>
<dbReference type="InterPro" id="IPR001242">
    <property type="entry name" value="Condensatn"/>
</dbReference>
<dbReference type="InterPro" id="IPR013120">
    <property type="entry name" value="Far_NAD-bd"/>
</dbReference>
<dbReference type="InterPro" id="IPR018201">
    <property type="entry name" value="Ketoacyl_synth_AS"/>
</dbReference>
<dbReference type="InterPro" id="IPR014031">
    <property type="entry name" value="Ketoacyl_synth_C"/>
</dbReference>
<dbReference type="InterPro" id="IPR014030">
    <property type="entry name" value="Ketoacyl_synth_N"/>
</dbReference>
<dbReference type="InterPro" id="IPR016036">
    <property type="entry name" value="Malonyl_transacylase_ACP-bd"/>
</dbReference>
<dbReference type="InterPro" id="IPR013217">
    <property type="entry name" value="Methyltransf_12"/>
</dbReference>
<dbReference type="InterPro" id="IPR036291">
    <property type="entry name" value="NAD(P)-bd_dom_sf"/>
</dbReference>
<dbReference type="InterPro" id="IPR056501">
    <property type="entry name" value="NAD-bd_HRPKS_sdrA"/>
</dbReference>
<dbReference type="InterPro" id="IPR032821">
    <property type="entry name" value="PKS_assoc"/>
</dbReference>
<dbReference type="InterPro" id="IPR020841">
    <property type="entry name" value="PKS_Beta-ketoAc_synthase_dom"/>
</dbReference>
<dbReference type="InterPro" id="IPR042104">
    <property type="entry name" value="PKS_dehydratase_sf"/>
</dbReference>
<dbReference type="InterPro" id="IPR020807">
    <property type="entry name" value="PKS_DH"/>
</dbReference>
<dbReference type="InterPro" id="IPR049551">
    <property type="entry name" value="PKS_DH_C"/>
</dbReference>
<dbReference type="InterPro" id="IPR049552">
    <property type="entry name" value="PKS_DH_N"/>
</dbReference>
<dbReference type="InterPro" id="IPR013968">
    <property type="entry name" value="PKS_KR"/>
</dbReference>
<dbReference type="InterPro" id="IPR049900">
    <property type="entry name" value="PKS_mFAS_DH"/>
</dbReference>
<dbReference type="InterPro" id="IPR050091">
    <property type="entry name" value="PKS_NRPS_Biosynth_Enz"/>
</dbReference>
<dbReference type="InterPro" id="IPR020806">
    <property type="entry name" value="PKS_PP-bd"/>
</dbReference>
<dbReference type="InterPro" id="IPR009081">
    <property type="entry name" value="PP-bd_ACP"/>
</dbReference>
<dbReference type="InterPro" id="IPR006162">
    <property type="entry name" value="Ppantetheine_attach_site"/>
</dbReference>
<dbReference type="InterPro" id="IPR029063">
    <property type="entry name" value="SAM-dependent_MTases_sf"/>
</dbReference>
<dbReference type="InterPro" id="IPR016039">
    <property type="entry name" value="Thiolase-like"/>
</dbReference>
<dbReference type="NCBIfam" id="TIGR01733">
    <property type="entry name" value="AA-adenyl-dom"/>
    <property type="match status" value="1"/>
</dbReference>
<dbReference type="PANTHER" id="PTHR43775">
    <property type="entry name" value="FATTY ACID SYNTHASE"/>
    <property type="match status" value="1"/>
</dbReference>
<dbReference type="PANTHER" id="PTHR43775:SF37">
    <property type="entry name" value="SI:DKEY-61P9.11"/>
    <property type="match status" value="1"/>
</dbReference>
<dbReference type="Pfam" id="PF00698">
    <property type="entry name" value="Acyl_transf_1"/>
    <property type="match status" value="1"/>
</dbReference>
<dbReference type="Pfam" id="PF00501">
    <property type="entry name" value="AMP-binding"/>
    <property type="match status" value="1"/>
</dbReference>
<dbReference type="Pfam" id="PF00668">
    <property type="entry name" value="Condensation"/>
    <property type="match status" value="1"/>
</dbReference>
<dbReference type="Pfam" id="PF16197">
    <property type="entry name" value="KAsynt_C_assoc"/>
    <property type="match status" value="1"/>
</dbReference>
<dbReference type="Pfam" id="PF00109">
    <property type="entry name" value="ketoacyl-synt"/>
    <property type="match status" value="1"/>
</dbReference>
<dbReference type="Pfam" id="PF02801">
    <property type="entry name" value="Ketoacyl-synt_C"/>
    <property type="match status" value="1"/>
</dbReference>
<dbReference type="Pfam" id="PF08659">
    <property type="entry name" value="KR"/>
    <property type="match status" value="1"/>
</dbReference>
<dbReference type="Pfam" id="PF08242">
    <property type="entry name" value="Methyltransf_12"/>
    <property type="match status" value="1"/>
</dbReference>
<dbReference type="Pfam" id="PF23114">
    <property type="entry name" value="NAD-bd_HRPKS_sdrA"/>
    <property type="match status" value="1"/>
</dbReference>
<dbReference type="Pfam" id="PF07993">
    <property type="entry name" value="NAD_binding_4"/>
    <property type="match status" value="1"/>
</dbReference>
<dbReference type="Pfam" id="PF21089">
    <property type="entry name" value="PKS_DH_N"/>
    <property type="match status" value="1"/>
</dbReference>
<dbReference type="Pfam" id="PF00550">
    <property type="entry name" value="PP-binding"/>
    <property type="match status" value="2"/>
</dbReference>
<dbReference type="Pfam" id="PF14765">
    <property type="entry name" value="PS-DH"/>
    <property type="match status" value="1"/>
</dbReference>
<dbReference type="SMART" id="SM00827">
    <property type="entry name" value="PKS_AT"/>
    <property type="match status" value="1"/>
</dbReference>
<dbReference type="SMART" id="SM00826">
    <property type="entry name" value="PKS_DH"/>
    <property type="match status" value="1"/>
</dbReference>
<dbReference type="SMART" id="SM00822">
    <property type="entry name" value="PKS_KR"/>
    <property type="match status" value="1"/>
</dbReference>
<dbReference type="SMART" id="SM00825">
    <property type="entry name" value="PKS_KS"/>
    <property type="match status" value="1"/>
</dbReference>
<dbReference type="SMART" id="SM00823">
    <property type="entry name" value="PKS_PP"/>
    <property type="match status" value="2"/>
</dbReference>
<dbReference type="SUPFAM" id="SSF56801">
    <property type="entry name" value="Acetyl-CoA synthetase-like"/>
    <property type="match status" value="1"/>
</dbReference>
<dbReference type="SUPFAM" id="SSF47336">
    <property type="entry name" value="ACP-like"/>
    <property type="match status" value="2"/>
</dbReference>
<dbReference type="SUPFAM" id="SSF52777">
    <property type="entry name" value="CoA-dependent acyltransferases"/>
    <property type="match status" value="2"/>
</dbReference>
<dbReference type="SUPFAM" id="SSF52151">
    <property type="entry name" value="FabD/lysophospholipase-like"/>
    <property type="match status" value="1"/>
</dbReference>
<dbReference type="SUPFAM" id="SSF51735">
    <property type="entry name" value="NAD(P)-binding Rossmann-fold domains"/>
    <property type="match status" value="2"/>
</dbReference>
<dbReference type="SUPFAM" id="SSF55048">
    <property type="entry name" value="Probable ACP-binding domain of malonyl-CoA ACP transacylase"/>
    <property type="match status" value="1"/>
</dbReference>
<dbReference type="SUPFAM" id="SSF53335">
    <property type="entry name" value="S-adenosyl-L-methionine-dependent methyltransferases"/>
    <property type="match status" value="1"/>
</dbReference>
<dbReference type="SUPFAM" id="SSF53901">
    <property type="entry name" value="Thiolase-like"/>
    <property type="match status" value="1"/>
</dbReference>
<dbReference type="PROSITE" id="PS00061">
    <property type="entry name" value="ADH_SHORT"/>
    <property type="match status" value="1"/>
</dbReference>
<dbReference type="PROSITE" id="PS00455">
    <property type="entry name" value="AMP_BINDING"/>
    <property type="match status" value="1"/>
</dbReference>
<dbReference type="PROSITE" id="PS50075">
    <property type="entry name" value="CARRIER"/>
    <property type="match status" value="2"/>
</dbReference>
<dbReference type="PROSITE" id="PS00606">
    <property type="entry name" value="KS3_1"/>
    <property type="match status" value="1"/>
</dbReference>
<dbReference type="PROSITE" id="PS52004">
    <property type="entry name" value="KS3_2"/>
    <property type="match status" value="1"/>
</dbReference>
<dbReference type="PROSITE" id="PS00012">
    <property type="entry name" value="PHOSPHOPANTETHEINE"/>
    <property type="match status" value="2"/>
</dbReference>
<dbReference type="PROSITE" id="PS52019">
    <property type="entry name" value="PKS_MFAS_DH"/>
    <property type="match status" value="1"/>
</dbReference>
<feature type="chain" id="PRO_0000454637" description="Hybrid PKS-NRPS synthetase LUC5">
    <location>
        <begin position="1"/>
        <end position="3926"/>
    </location>
</feature>
<feature type="domain" description="Ketosynthase family 3 (KS3)" evidence="3">
    <location>
        <begin position="8"/>
        <end position="439"/>
    </location>
</feature>
<feature type="domain" description="PKS/mFAS DH" evidence="4">
    <location>
        <begin position="932"/>
        <end position="1228"/>
    </location>
</feature>
<feature type="domain" description="Carrier 1" evidence="2">
    <location>
        <begin position="2371"/>
        <end position="2448"/>
    </location>
</feature>
<feature type="domain" description="Carrier 2" evidence="2">
    <location>
        <begin position="3501"/>
        <end position="3580"/>
    </location>
</feature>
<feature type="region of interest" description="Malonyl-CoA:ACP transacylase (MAT) domain" evidence="1">
    <location>
        <begin position="545"/>
        <end position="863"/>
    </location>
</feature>
<feature type="region of interest" description="Dehydratase (DH) domain" evidence="1">
    <location>
        <begin position="932"/>
        <end position="1225"/>
    </location>
</feature>
<feature type="region of interest" description="N-terminal hotdog fold" evidence="4">
    <location>
        <begin position="932"/>
        <end position="1065"/>
    </location>
</feature>
<feature type="region of interest" description="C-terminal hotdog fold" evidence="4">
    <location>
        <begin position="1081"/>
        <end position="1228"/>
    </location>
</feature>
<feature type="region of interest" description="C-methyltransferase (CMeT) domain" evidence="1">
    <location>
        <begin position="1344"/>
        <end position="1572"/>
    </location>
</feature>
<feature type="region of interest" description="Ketoreductase (KR) domain 1" evidence="1">
    <location>
        <begin position="2091"/>
        <end position="2265"/>
    </location>
</feature>
<feature type="region of interest" description="Disordered" evidence="5">
    <location>
        <begin position="2474"/>
        <end position="2518"/>
    </location>
</feature>
<feature type="region of interest" description="Condensation" evidence="1">
    <location>
        <begin position="2525"/>
        <end position="2810"/>
    </location>
</feature>
<feature type="region of interest" description="Adenylation" evidence="1">
    <location>
        <begin position="2979"/>
        <end position="3389"/>
    </location>
</feature>
<feature type="region of interest" description="Thiolester reductase (TE) domain" evidence="1">
    <location>
        <begin position="3619"/>
        <end position="3840"/>
    </location>
</feature>
<feature type="compositionally biased region" description="Polar residues" evidence="5">
    <location>
        <begin position="2474"/>
        <end position="2506"/>
    </location>
</feature>
<feature type="compositionally biased region" description="Basic and acidic residues" evidence="5">
    <location>
        <begin position="2507"/>
        <end position="2518"/>
    </location>
</feature>
<feature type="active site" description="For beta-ketoacyl synthase activity" evidence="3">
    <location>
        <position position="181"/>
    </location>
</feature>
<feature type="active site" description="For beta-ketoacyl synthase activity" evidence="3">
    <location>
        <position position="318"/>
    </location>
</feature>
<feature type="active site" description="For beta-ketoacyl synthase activity" evidence="3">
    <location>
        <position position="359"/>
    </location>
</feature>
<feature type="active site" description="Proton acceptor; for dehydratase activity" evidence="4">
    <location>
        <position position="964"/>
    </location>
</feature>
<feature type="active site" description="Proton donor; for dehydratase activity" evidence="4">
    <location>
        <position position="1138"/>
    </location>
</feature>
<feature type="modified residue" description="O-(pantetheine 4'-phosphoryl)serine" evidence="2">
    <location>
        <position position="2408"/>
    </location>
</feature>
<feature type="modified residue" description="O-(pantetheine 4'-phosphoryl)serine" evidence="2">
    <location>
        <position position="3540"/>
    </location>
</feature>
<comment type="function">
    <text evidence="6 7 11">Hybrid PKS-NRPS synthetase; part of the gene cluster that mediates the biosynthesis of the mycotoxin lucilactaene and the lucilactaene-related compound NG-391 that act as cell cycle inhibitors with potent growth inhibitory activity against malarial parasites, moderate growth inhibitory activity against cancer cells, and no activity against bacteria and fungi (PubMed:32043422, PubMed:35484225). The hybrid PKS-NRPS synthetase LUC5 is responsible for the condensation of one acetyl-coenzyme A (CoA) unit with six malonyl-CoA units and the amide linkage of the arising heptaketide and homoserine, subsequently releasing the first intermediate prelucilactaene B, as an alcohol with an open ring structure (PubMed:32043422). Lucilactaene and NG-391 lack the 7-methyl group present in fusarins which is inserted in fusarins by the C-methyltransferase (CMeT) domain of the fusarin synthetase FUS1, suggesting that the CMet domain of LUC5 does not methylate this position (PubMed:32043422). Within the pathway, both the cytochrome P450 monooxygenase LUC2 and the hydrolase LUC6 function in parallel in modification of prelucilactaene B. LUC6 may catalyze the 2-pyrrolidone ring formation to form prelucilactaene C from prelucilactaene B, followed by C-15 hydroxylation by the same enzyme to give prelucilactaene D, which is then converted to prelucilactaene E by epoxidation, and finally to prelucilactaene F by cyclization. Prelucilactane D, prelucilactaene E, and prelucilactaene F can be converted to dihydrolucilactaene, NG391, and lucilactaene, respectively, via C-20 methyl group hydroxylation by the cytochrome P450 monooxygenase LUC2. However, LUC2, unlike FUS8 in fusarin C biosynthesis, is not enough for the full oxidation of the C-20 methyl group into carboxylic acid, which is a prerequisite for the final methylation step. The aldehyde dehydrogenase LUC3 is involved in the biosynthesis by further oxidation of the C-20 alcoholic analog prelucilactaene G into a carboxylic derivative. This unidentified carboxylic derivative may be converted to demethyllucilactaene. As the last step, the methyltransferase LUC1 methylates the hydroxyl group at C-21 of demethyllucilactaene to generate lucilactaene (Probable).</text>
</comment>
<comment type="pathway">
    <text evidence="6 7">Mycotoxin biosynthesis.</text>
</comment>
<comment type="domain">
    <text evidence="10">NRP synthetases are composed of discrete domains (adenylation (A), thiolation (T) or peptidyl carrier protein (PCP) and condensation (C) domains) which when grouped together are referred to as a single module. Each module is responsible for the recognition (via the A domain) and incorporation of a single amino acid into the growing peptide product. Thus, an NRP synthetase is generally composed of one or more modules and can terminate in a thioesterase domain (TE) that releases the newly synthesized peptide from the enzyme. Occasionally, epimerase (E) domains (responsible for L- to D- amino acid conversion) are present within the NRP synthetase. LUC5 also contains polyketide synthase modules including a ketosynthase (KS) domain, a malonyl-CoA:ACP transacylase (MAT) domain, a dehydrogenase (DH) domain, a C-methyltransferase (CMeT) domain, and a ketoreductase (KR) domain. LUC5 has the following architecture: KS-MAT-DH-CMet-KR-T-C-A-T-TE.</text>
</comment>
<comment type="disruption phenotype">
    <text evidence="6 7">Abolishes the production of lucilactaene and NG-391.</text>
</comment>
<comment type="similarity">
    <text evidence="9">In the C-terminal section; belongs to the NRP synthetase family.</text>
</comment>
<accession>A0A6J4B487</accession>
<organism>
    <name type="scientific">Fusarium sp</name>
    <dbReference type="NCBI Taxonomy" id="29916"/>
    <lineage>
        <taxon>Eukaryota</taxon>
        <taxon>Fungi</taxon>
        <taxon>Dikarya</taxon>
        <taxon>Ascomycota</taxon>
        <taxon>Pezizomycotina</taxon>
        <taxon>Sordariomycetes</taxon>
        <taxon>Hypocreomycetidae</taxon>
        <taxon>Hypocreales</taxon>
        <taxon>Nectriaceae</taxon>
        <taxon>Fusarium</taxon>
    </lineage>
</organism>
<name>LUC5_FUSSX</name>